<reference key="1">
    <citation type="journal article" date="2001" name="Lancet">
        <title>Whole genome sequencing of meticillin-resistant Staphylococcus aureus.</title>
        <authorList>
            <person name="Kuroda M."/>
            <person name="Ohta T."/>
            <person name="Uchiyama I."/>
            <person name="Baba T."/>
            <person name="Yuzawa H."/>
            <person name="Kobayashi I."/>
            <person name="Cui L."/>
            <person name="Oguchi A."/>
            <person name="Aoki K."/>
            <person name="Nagai Y."/>
            <person name="Lian J.-Q."/>
            <person name="Ito T."/>
            <person name="Kanamori M."/>
            <person name="Matsumaru H."/>
            <person name="Maruyama A."/>
            <person name="Murakami H."/>
            <person name="Hosoyama A."/>
            <person name="Mizutani-Ui Y."/>
            <person name="Takahashi N.K."/>
            <person name="Sawano T."/>
            <person name="Inoue R."/>
            <person name="Kaito C."/>
            <person name="Sekimizu K."/>
            <person name="Hirakawa H."/>
            <person name="Kuhara S."/>
            <person name="Goto S."/>
            <person name="Yabuzaki J."/>
            <person name="Kanehisa M."/>
            <person name="Yamashita A."/>
            <person name="Oshima K."/>
            <person name="Furuya K."/>
            <person name="Yoshino C."/>
            <person name="Shiba T."/>
            <person name="Hattori M."/>
            <person name="Ogasawara N."/>
            <person name="Hayashi H."/>
            <person name="Hiramatsu K."/>
        </authorList>
    </citation>
    <scope>NUCLEOTIDE SEQUENCE [LARGE SCALE GENOMIC DNA]</scope>
    <source>
        <strain>Mu50 / ATCC 700699</strain>
    </source>
</reference>
<name>SPLD_STAAM</name>
<feature type="signal peptide" evidence="2">
    <location>
        <begin position="1"/>
        <end position="36"/>
    </location>
</feature>
<feature type="chain" id="PRO_0000359566" description="Serine protease SplD">
    <location>
        <begin position="37"/>
        <end position="239"/>
    </location>
</feature>
<feature type="active site" description="Charge relay system" evidence="1">
    <location>
        <position position="75"/>
    </location>
</feature>
<feature type="active site" description="Charge relay system" evidence="1">
    <location>
        <position position="114"/>
    </location>
</feature>
<feature type="active site" description="Charge relay system" evidence="1">
    <location>
        <position position="192"/>
    </location>
</feature>
<dbReference type="EC" id="3.4.21.-"/>
<dbReference type="EMBL" id="BA000017">
    <property type="protein sequence ID" value="BAB57972.1"/>
    <property type="molecule type" value="Genomic_DNA"/>
</dbReference>
<dbReference type="RefSeq" id="WP_001038704.1">
    <property type="nucleotide sequence ID" value="NC_002758.2"/>
</dbReference>
<dbReference type="SMR" id="Q7A2Q9"/>
<dbReference type="MEROPS" id="S01.526"/>
<dbReference type="KEGG" id="sav:SAV1810"/>
<dbReference type="HOGENOM" id="CLU_073589_2_0_9"/>
<dbReference type="PhylomeDB" id="Q7A2Q9"/>
<dbReference type="Proteomes" id="UP000002481">
    <property type="component" value="Chromosome"/>
</dbReference>
<dbReference type="GO" id="GO:0005576">
    <property type="term" value="C:extracellular region"/>
    <property type="evidence" value="ECO:0007669"/>
    <property type="project" value="UniProtKB-SubCell"/>
</dbReference>
<dbReference type="GO" id="GO:0008236">
    <property type="term" value="F:serine-type peptidase activity"/>
    <property type="evidence" value="ECO:0007669"/>
    <property type="project" value="UniProtKB-KW"/>
</dbReference>
<dbReference type="GO" id="GO:0006508">
    <property type="term" value="P:proteolysis"/>
    <property type="evidence" value="ECO:0007669"/>
    <property type="project" value="UniProtKB-KW"/>
</dbReference>
<dbReference type="Gene3D" id="2.40.10.10">
    <property type="entry name" value="Trypsin-like serine proteases"/>
    <property type="match status" value="2"/>
</dbReference>
<dbReference type="InterPro" id="IPR009003">
    <property type="entry name" value="Peptidase_S1_PA"/>
</dbReference>
<dbReference type="InterPro" id="IPR043504">
    <property type="entry name" value="Peptidase_S1_PA_chymotrypsin"/>
</dbReference>
<dbReference type="InterPro" id="IPR008256">
    <property type="entry name" value="Peptidase_S1B"/>
</dbReference>
<dbReference type="InterPro" id="IPR028301">
    <property type="entry name" value="V8_his_AS"/>
</dbReference>
<dbReference type="PANTHER" id="PTHR43019:SF23">
    <property type="entry name" value="PROTEASE DO-LIKE 5, CHLOROPLASTIC"/>
    <property type="match status" value="1"/>
</dbReference>
<dbReference type="PANTHER" id="PTHR43019">
    <property type="entry name" value="SERINE ENDOPROTEASE DEGS"/>
    <property type="match status" value="1"/>
</dbReference>
<dbReference type="Pfam" id="PF13365">
    <property type="entry name" value="Trypsin_2"/>
    <property type="match status" value="1"/>
</dbReference>
<dbReference type="PRINTS" id="PR00839">
    <property type="entry name" value="V8PROTEASE"/>
</dbReference>
<dbReference type="SUPFAM" id="SSF50494">
    <property type="entry name" value="Trypsin-like serine proteases"/>
    <property type="match status" value="1"/>
</dbReference>
<dbReference type="PROSITE" id="PS00672">
    <property type="entry name" value="V8_HIS"/>
    <property type="match status" value="1"/>
</dbReference>
<proteinExistence type="inferred from homology"/>
<accession>Q7A2Q9</accession>
<evidence type="ECO:0000250" key="1"/>
<evidence type="ECO:0000255" key="2"/>
<evidence type="ECO:0000305" key="3"/>
<sequence>MNKNIIIKSIAALTILTSITGVGTTVVDGIQQTAKAENSVKLITNTNVAPYSGVTWMGAGTGFVVGNHTIITNKHVTYHMKVGDEIKAHPNGFYNNGGGLYKVTKIVDYPGKEDIAVVQVEEKSTQPKGRKFKDFTSKFNIASEAKENEPISVIGYPNPNGNKLQMYESTGKVLSVNGNIVTSDAVVQPGSSGSPILNSKREAIGVMYASDKPTGESTRSFAVYFSPEIKKFIADNLDK</sequence>
<protein>
    <recommendedName>
        <fullName>Serine protease SplD</fullName>
        <ecNumber>3.4.21.-</ecNumber>
    </recommendedName>
</protein>
<gene>
    <name type="primary">splD</name>
    <name type="ordered locus">SAV1810</name>
</gene>
<comment type="subcellular location">
    <subcellularLocation>
        <location evidence="1">Secreted</location>
    </subcellularLocation>
</comment>
<comment type="similarity">
    <text evidence="3">Belongs to the peptidase S1B family.</text>
</comment>
<keyword id="KW-0378">Hydrolase</keyword>
<keyword id="KW-0645">Protease</keyword>
<keyword id="KW-0964">Secreted</keyword>
<keyword id="KW-0720">Serine protease</keyword>
<keyword id="KW-0732">Signal</keyword>
<organism>
    <name type="scientific">Staphylococcus aureus (strain Mu50 / ATCC 700699)</name>
    <dbReference type="NCBI Taxonomy" id="158878"/>
    <lineage>
        <taxon>Bacteria</taxon>
        <taxon>Bacillati</taxon>
        <taxon>Bacillota</taxon>
        <taxon>Bacilli</taxon>
        <taxon>Bacillales</taxon>
        <taxon>Staphylococcaceae</taxon>
        <taxon>Staphylococcus</taxon>
    </lineage>
</organism>